<gene>
    <name type="primary">lprE</name>
    <name type="ordered locus">MT1291</name>
</gene>
<name>LPRE_MYCTO</name>
<organism>
    <name type="scientific">Mycobacterium tuberculosis (strain CDC 1551 / Oshkosh)</name>
    <dbReference type="NCBI Taxonomy" id="83331"/>
    <lineage>
        <taxon>Bacteria</taxon>
        <taxon>Bacillati</taxon>
        <taxon>Actinomycetota</taxon>
        <taxon>Actinomycetes</taxon>
        <taxon>Mycobacteriales</taxon>
        <taxon>Mycobacteriaceae</taxon>
        <taxon>Mycobacterium</taxon>
        <taxon>Mycobacterium tuberculosis complex</taxon>
    </lineage>
</organism>
<dbReference type="EMBL" id="AE000516">
    <property type="protein sequence ID" value="AAK45549.1"/>
    <property type="molecule type" value="Genomic_DNA"/>
</dbReference>
<dbReference type="PIR" id="D70752">
    <property type="entry name" value="D70752"/>
</dbReference>
<dbReference type="RefSeq" id="WP_003406334.1">
    <property type="nucleotide sequence ID" value="NZ_KK341227.1"/>
</dbReference>
<dbReference type="KEGG" id="mtc:MT1291"/>
<dbReference type="PATRIC" id="fig|83331.31.peg.1392"/>
<dbReference type="HOGENOM" id="CLU_1364969_0_0_11"/>
<dbReference type="Proteomes" id="UP000001020">
    <property type="component" value="Chromosome"/>
</dbReference>
<dbReference type="GO" id="GO:0005886">
    <property type="term" value="C:plasma membrane"/>
    <property type="evidence" value="ECO:0007669"/>
    <property type="project" value="UniProtKB-SubCell"/>
</dbReference>
<dbReference type="InterPro" id="IPR025971">
    <property type="entry name" value="LppP/LprE"/>
</dbReference>
<dbReference type="Pfam" id="PF14041">
    <property type="entry name" value="Lipoprotein_21"/>
    <property type="match status" value="1"/>
</dbReference>
<sequence length="202" mass="20442">MPGVWSPPCPTTPRVGVVAALVAATLTGCGSGDSTVAKTPEATPSLSTAHPAPPSSEPSPPSATAAPPSNHSAAPVDPCAVNLASPTIAKVVSELPRDPRSEQPWNPEPLAGNYNECAQLSAVVIKANTNAGNPTTRAVMFHLGKYIPQGVPDTYGFTGIDTSQCTGDTVALTYASGIGLNNVVKFRWNGGGVELIGNTTGG</sequence>
<reference key="1">
    <citation type="journal article" date="2002" name="J. Bacteriol.">
        <title>Whole-genome comparison of Mycobacterium tuberculosis clinical and laboratory strains.</title>
        <authorList>
            <person name="Fleischmann R.D."/>
            <person name="Alland D."/>
            <person name="Eisen J.A."/>
            <person name="Carpenter L."/>
            <person name="White O."/>
            <person name="Peterson J.D."/>
            <person name="DeBoy R.T."/>
            <person name="Dodson R.J."/>
            <person name="Gwinn M.L."/>
            <person name="Haft D.H."/>
            <person name="Hickey E.K."/>
            <person name="Kolonay J.F."/>
            <person name="Nelson W.C."/>
            <person name="Umayam L.A."/>
            <person name="Ermolaeva M.D."/>
            <person name="Salzberg S.L."/>
            <person name="Delcher A."/>
            <person name="Utterback T.R."/>
            <person name="Weidman J.F."/>
            <person name="Khouri H.M."/>
            <person name="Gill J."/>
            <person name="Mikula A."/>
            <person name="Bishai W."/>
            <person name="Jacobs W.R. Jr."/>
            <person name="Venter J.C."/>
            <person name="Fraser C.M."/>
        </authorList>
    </citation>
    <scope>NUCLEOTIDE SEQUENCE [LARGE SCALE GENOMIC DNA]</scope>
    <source>
        <strain>CDC 1551 / Oshkosh</strain>
    </source>
</reference>
<comment type="subcellular location">
    <subcellularLocation>
        <location evidence="3">Cell membrane</location>
        <topology evidence="3">Lipid-anchor</topology>
    </subcellularLocation>
</comment>
<keyword id="KW-1003">Cell membrane</keyword>
<keyword id="KW-0449">Lipoprotein</keyword>
<keyword id="KW-0472">Membrane</keyword>
<keyword id="KW-0564">Palmitate</keyword>
<keyword id="KW-1185">Reference proteome</keyword>
<keyword id="KW-0732">Signal</keyword>
<proteinExistence type="inferred from homology"/>
<accession>P9WK48</accession>
<accession>L0T935</accession>
<accession>P65312</accession>
<accession>Q11065</accession>
<feature type="signal peptide" evidence="1">
    <location>
        <begin position="1"/>
        <end position="28"/>
    </location>
</feature>
<feature type="chain" id="PRO_0000427716" description="Putative lipoprotein LprE">
    <location>
        <begin position="29"/>
        <end position="202"/>
    </location>
</feature>
<feature type="region of interest" description="Disordered" evidence="2">
    <location>
        <begin position="29"/>
        <end position="78"/>
    </location>
</feature>
<feature type="compositionally biased region" description="Polar residues" evidence="2">
    <location>
        <begin position="32"/>
        <end position="46"/>
    </location>
</feature>
<feature type="compositionally biased region" description="Pro residues" evidence="2">
    <location>
        <begin position="51"/>
        <end position="61"/>
    </location>
</feature>
<feature type="compositionally biased region" description="Low complexity" evidence="2">
    <location>
        <begin position="62"/>
        <end position="75"/>
    </location>
</feature>
<feature type="lipid moiety-binding region" description="N-palmitoyl cysteine" evidence="1">
    <location>
        <position position="29"/>
    </location>
</feature>
<feature type="lipid moiety-binding region" description="S-diacylglycerol cysteine" evidence="1">
    <location>
        <position position="29"/>
    </location>
</feature>
<protein>
    <recommendedName>
        <fullName>Putative lipoprotein LprE</fullName>
    </recommendedName>
</protein>
<evidence type="ECO:0000255" key="1"/>
<evidence type="ECO:0000256" key="2">
    <source>
        <dbReference type="SAM" id="MobiDB-lite"/>
    </source>
</evidence>
<evidence type="ECO:0000305" key="3"/>